<accession>B9MEI9</accession>
<name>HRCA_ACIET</name>
<reference key="1">
    <citation type="submission" date="2009-01" db="EMBL/GenBank/DDBJ databases">
        <title>Complete sequence of Diaphorobacter sp. TPSY.</title>
        <authorList>
            <consortium name="US DOE Joint Genome Institute"/>
            <person name="Lucas S."/>
            <person name="Copeland A."/>
            <person name="Lapidus A."/>
            <person name="Glavina del Rio T."/>
            <person name="Tice H."/>
            <person name="Bruce D."/>
            <person name="Goodwin L."/>
            <person name="Pitluck S."/>
            <person name="Chertkov O."/>
            <person name="Brettin T."/>
            <person name="Detter J.C."/>
            <person name="Han C."/>
            <person name="Larimer F."/>
            <person name="Land M."/>
            <person name="Hauser L."/>
            <person name="Kyrpides N."/>
            <person name="Mikhailova N."/>
            <person name="Coates J.D."/>
        </authorList>
    </citation>
    <scope>NUCLEOTIDE SEQUENCE [LARGE SCALE GENOMIC DNA]</scope>
    <source>
        <strain>TPSY</strain>
    </source>
</reference>
<organism>
    <name type="scientific">Acidovorax ebreus (strain TPSY)</name>
    <name type="common">Diaphorobacter sp. (strain TPSY)</name>
    <dbReference type="NCBI Taxonomy" id="535289"/>
    <lineage>
        <taxon>Bacteria</taxon>
        <taxon>Pseudomonadati</taxon>
        <taxon>Pseudomonadota</taxon>
        <taxon>Betaproteobacteria</taxon>
        <taxon>Burkholderiales</taxon>
        <taxon>Comamonadaceae</taxon>
        <taxon>Diaphorobacter</taxon>
    </lineage>
</organism>
<dbReference type="EMBL" id="CP001392">
    <property type="protein sequence ID" value="ACM32325.1"/>
    <property type="molecule type" value="Genomic_DNA"/>
</dbReference>
<dbReference type="RefSeq" id="WP_012655817.1">
    <property type="nucleotide sequence ID" value="NC_011992.1"/>
</dbReference>
<dbReference type="SMR" id="B9MEI9"/>
<dbReference type="KEGG" id="dia:Dtpsy_0847"/>
<dbReference type="eggNOG" id="COG1420">
    <property type="taxonomic scope" value="Bacteria"/>
</dbReference>
<dbReference type="HOGENOM" id="CLU_050019_0_0_4"/>
<dbReference type="Proteomes" id="UP000000450">
    <property type="component" value="Chromosome"/>
</dbReference>
<dbReference type="GO" id="GO:0003677">
    <property type="term" value="F:DNA binding"/>
    <property type="evidence" value="ECO:0007669"/>
    <property type="project" value="InterPro"/>
</dbReference>
<dbReference type="GO" id="GO:0045892">
    <property type="term" value="P:negative regulation of DNA-templated transcription"/>
    <property type="evidence" value="ECO:0007669"/>
    <property type="project" value="UniProtKB-UniRule"/>
</dbReference>
<dbReference type="Gene3D" id="3.30.450.40">
    <property type="match status" value="1"/>
</dbReference>
<dbReference type="Gene3D" id="3.30.390.60">
    <property type="entry name" value="Heat-inducible transcription repressor hrca homolog, domain 3"/>
    <property type="match status" value="1"/>
</dbReference>
<dbReference type="Gene3D" id="1.10.10.10">
    <property type="entry name" value="Winged helix-like DNA-binding domain superfamily/Winged helix DNA-binding domain"/>
    <property type="match status" value="1"/>
</dbReference>
<dbReference type="HAMAP" id="MF_00081">
    <property type="entry name" value="HrcA"/>
    <property type="match status" value="1"/>
</dbReference>
<dbReference type="InterPro" id="IPR029016">
    <property type="entry name" value="GAF-like_dom_sf"/>
</dbReference>
<dbReference type="InterPro" id="IPR002571">
    <property type="entry name" value="HrcA"/>
</dbReference>
<dbReference type="InterPro" id="IPR021153">
    <property type="entry name" value="HrcA_C"/>
</dbReference>
<dbReference type="InterPro" id="IPR036388">
    <property type="entry name" value="WH-like_DNA-bd_sf"/>
</dbReference>
<dbReference type="InterPro" id="IPR036390">
    <property type="entry name" value="WH_DNA-bd_sf"/>
</dbReference>
<dbReference type="InterPro" id="IPR005104">
    <property type="entry name" value="WHTH_HrcA_DNA-bd"/>
</dbReference>
<dbReference type="InterPro" id="IPR023120">
    <property type="entry name" value="WHTH_transcript_rep_HrcA_IDD"/>
</dbReference>
<dbReference type="NCBIfam" id="TIGR00331">
    <property type="entry name" value="hrcA"/>
    <property type="match status" value="1"/>
</dbReference>
<dbReference type="PANTHER" id="PTHR34824">
    <property type="entry name" value="HEAT-INDUCIBLE TRANSCRIPTION REPRESSOR HRCA"/>
    <property type="match status" value="1"/>
</dbReference>
<dbReference type="PANTHER" id="PTHR34824:SF1">
    <property type="entry name" value="HEAT-INDUCIBLE TRANSCRIPTION REPRESSOR HRCA"/>
    <property type="match status" value="1"/>
</dbReference>
<dbReference type="Pfam" id="PF01628">
    <property type="entry name" value="HrcA"/>
    <property type="match status" value="1"/>
</dbReference>
<dbReference type="Pfam" id="PF03444">
    <property type="entry name" value="HrcA_DNA-bdg"/>
    <property type="match status" value="1"/>
</dbReference>
<dbReference type="PIRSF" id="PIRSF005485">
    <property type="entry name" value="HrcA"/>
    <property type="match status" value="1"/>
</dbReference>
<dbReference type="SUPFAM" id="SSF55781">
    <property type="entry name" value="GAF domain-like"/>
    <property type="match status" value="1"/>
</dbReference>
<dbReference type="SUPFAM" id="SSF46785">
    <property type="entry name" value="Winged helix' DNA-binding domain"/>
    <property type="match status" value="1"/>
</dbReference>
<feature type="chain" id="PRO_1000118302" description="Heat-inducible transcription repressor HrcA">
    <location>
        <begin position="1"/>
        <end position="334"/>
    </location>
</feature>
<comment type="function">
    <text evidence="1">Negative regulator of class I heat shock genes (grpE-dnaK-dnaJ and groELS operons). Prevents heat-shock induction of these operons.</text>
</comment>
<comment type="similarity">
    <text evidence="1">Belongs to the HrcA family.</text>
</comment>
<gene>
    <name evidence="1" type="primary">hrcA</name>
    <name type="ordered locus">Dtpsy_0847</name>
</gene>
<proteinExistence type="inferred from homology"/>
<protein>
    <recommendedName>
        <fullName evidence="1">Heat-inducible transcription repressor HrcA</fullName>
    </recommendedName>
</protein>
<keyword id="KW-1185">Reference proteome</keyword>
<keyword id="KW-0678">Repressor</keyword>
<keyword id="KW-0346">Stress response</keyword>
<keyword id="KW-0804">Transcription</keyword>
<keyword id="KW-0805">Transcription regulation</keyword>
<evidence type="ECO:0000255" key="1">
    <source>
        <dbReference type="HAMAP-Rule" id="MF_00081"/>
    </source>
</evidence>
<sequence length="334" mass="36874">MLDDRSKLLLKALVERYIAEGQPVGSRTLSRASGLELSPATIRNVMADLEDLGLIASPHTSAGRVPTAKGYRLFVDTMLTVQQEQLPTVQLMPEQPQKVIANAAHLLSSLSQFVGVVMAPRRASVFRHIEFLRLSEKRFLVIIVSPDGDVQNRVIFTEADYSQSQLVEAANFLNANYAGLTMEQVRERLKLEVDKLRGEIAALMQAAVSVDSEAMSGSQDEVVFSGERNLLSVSDFSSDMSHLRRAFDLFEQKTQILRLLDISSRAEGVRIFIGGESQVVPFEELSVVSAPYEVDGQVVGTLGVIGPTRMPYDRMIQIVDITSKLVSNALSHRK</sequence>